<feature type="chain" id="PRO_0000346545" description="Potassium/proton antiporter CemA">
    <location>
        <begin position="1"/>
        <end position="214"/>
    </location>
</feature>
<feature type="transmembrane region" description="Helical" evidence="1">
    <location>
        <begin position="92"/>
        <end position="112"/>
    </location>
</feature>
<feature type="transmembrane region" description="Helical" evidence="1">
    <location>
        <begin position="174"/>
        <end position="194"/>
    </location>
</feature>
<keyword id="KW-0050">Antiport</keyword>
<keyword id="KW-0150">Chloroplast</keyword>
<keyword id="KW-0375">Hydrogen ion transport</keyword>
<keyword id="KW-0406">Ion transport</keyword>
<keyword id="KW-0472">Membrane</keyword>
<keyword id="KW-0934">Plastid</keyword>
<keyword id="KW-1001">Plastid inner membrane</keyword>
<keyword id="KW-0630">Potassium</keyword>
<keyword id="KW-0633">Potassium transport</keyword>
<keyword id="KW-0812">Transmembrane</keyword>
<keyword id="KW-1133">Transmembrane helix</keyword>
<keyword id="KW-0813">Transport</keyword>
<protein>
    <recommendedName>
        <fullName evidence="1">Potassium/proton antiporter CemA</fullName>
    </recommendedName>
    <alternativeName>
        <fullName evidence="1">Chloroplast envelope membrane protein A</fullName>
        <shortName evidence="1">CemA</shortName>
    </alternativeName>
</protein>
<name>CEMA_OENBI</name>
<proteinExistence type="evidence at protein level"/>
<organism>
    <name type="scientific">Oenothera biennis</name>
    <name type="common">German evening primrose</name>
    <name type="synonym">Onagra biennis</name>
    <dbReference type="NCBI Taxonomy" id="3942"/>
    <lineage>
        <taxon>Eukaryota</taxon>
        <taxon>Viridiplantae</taxon>
        <taxon>Streptophyta</taxon>
        <taxon>Embryophyta</taxon>
        <taxon>Tracheophyta</taxon>
        <taxon>Spermatophyta</taxon>
        <taxon>Magnoliopsida</taxon>
        <taxon>eudicotyledons</taxon>
        <taxon>Gunneridae</taxon>
        <taxon>Pentapetalae</taxon>
        <taxon>rosids</taxon>
        <taxon>malvids</taxon>
        <taxon>Myrtales</taxon>
        <taxon>Onagraceae</taxon>
        <taxon>Onagroideae</taxon>
        <taxon>Onagreae</taxon>
        <taxon>Oenothera</taxon>
    </lineage>
</organism>
<dbReference type="EMBL" id="EU262889">
    <property type="protein sequence ID" value="ABW98884.1"/>
    <property type="molecule type" value="Genomic_DNA"/>
</dbReference>
<dbReference type="RefSeq" id="YP_001687379.1">
    <property type="nucleotide sequence ID" value="NC_010361.1"/>
</dbReference>
<dbReference type="SMR" id="B0Z4X2"/>
<dbReference type="GeneID" id="5951987"/>
<dbReference type="GO" id="GO:0009706">
    <property type="term" value="C:chloroplast inner membrane"/>
    <property type="evidence" value="ECO:0007669"/>
    <property type="project" value="UniProtKB-SubCell"/>
</dbReference>
<dbReference type="GO" id="GO:0015297">
    <property type="term" value="F:antiporter activity"/>
    <property type="evidence" value="ECO:0007669"/>
    <property type="project" value="UniProtKB-KW"/>
</dbReference>
<dbReference type="GO" id="GO:0015078">
    <property type="term" value="F:proton transmembrane transporter activity"/>
    <property type="evidence" value="ECO:0007669"/>
    <property type="project" value="UniProtKB-UniRule"/>
</dbReference>
<dbReference type="GO" id="GO:0006813">
    <property type="term" value="P:potassium ion transport"/>
    <property type="evidence" value="ECO:0007669"/>
    <property type="project" value="UniProtKB-UniRule"/>
</dbReference>
<dbReference type="HAMAP" id="MF_01308">
    <property type="entry name" value="CemA_PxcA"/>
    <property type="match status" value="1"/>
</dbReference>
<dbReference type="InterPro" id="IPR004282">
    <property type="entry name" value="CemA"/>
</dbReference>
<dbReference type="PANTHER" id="PTHR33650:SF2">
    <property type="entry name" value="CHLOROPLAST ENVELOPE MEMBRANE PROTEIN"/>
    <property type="match status" value="1"/>
</dbReference>
<dbReference type="PANTHER" id="PTHR33650">
    <property type="entry name" value="CHLOROPLAST ENVELOPE MEMBRANE PROTEIN-RELATED"/>
    <property type="match status" value="1"/>
</dbReference>
<dbReference type="Pfam" id="PF03040">
    <property type="entry name" value="CemA"/>
    <property type="match status" value="1"/>
</dbReference>
<gene>
    <name evidence="1" type="primary">cemA</name>
</gene>
<comment type="function">
    <text evidence="1">Contributes to K(+)/H(+) antiport activity by supporting proton efflux to control proton extrusion and homeostasis in chloroplasts in a light-dependent manner to modulate photosynthesis. Prevents excessive induction of non-photochemical quenching (NPQ) under continuous-light conditions. Indirectly promotes efficient inorganic carbon uptake into chloroplasts.</text>
</comment>
<comment type="catalytic activity">
    <reaction evidence="1">
        <text>K(+)(in) + H(+)(out) = K(+)(out) + H(+)(in)</text>
        <dbReference type="Rhea" id="RHEA:29467"/>
        <dbReference type="ChEBI" id="CHEBI:15378"/>
        <dbReference type="ChEBI" id="CHEBI:29103"/>
    </reaction>
</comment>
<comment type="subcellular location">
    <subcellularLocation>
        <location evidence="1">Plastid</location>
        <location evidence="1">Chloroplast inner membrane</location>
        <topology evidence="1">Multi-pass membrane protein</topology>
    </subcellularLocation>
</comment>
<comment type="similarity">
    <text evidence="1 2">Belongs to the CemA family.</text>
</comment>
<sequence>MVFFPWWISLLFNKGLESWVTNWWNTTHSETFLTDMQEKSILDKFIELEELLLLDEMINEYPETHLQTLRIGIHKEMVRLIKMRNEDHIHTILHLSTNIICFIIFRGYSILGNKELLILNSWMQEFLYNLSDTIKAFSILLLTDFCIGFHSPHGWELMIAYVYKDFGFAQNDQIISGLVSTFPVILDTIFKYWIFRYLNRVSPSLVVIYDSMND</sequence>
<reference key="1">
    <citation type="journal article" date="2008" name="Nucleic Acids Res.">
        <title>The complete nucleotide sequences of the five genetically distinct plastid genomes of Oenothera, subsection Oenothera: I. Sequence evaluation and plastome evolution.</title>
        <authorList>
            <person name="Greiner S."/>
            <person name="Wang X."/>
            <person name="Rauwolf U."/>
            <person name="Silber M.V."/>
            <person name="Mayer K."/>
            <person name="Meurer J."/>
            <person name="Haberer G."/>
            <person name="Herrmann R.G."/>
        </authorList>
    </citation>
    <scope>NUCLEOTIDE SEQUENCE [LARGE SCALE GENOMIC DNA]</scope>
    <scope>IDENTIFICATION BY IMMUNOBLOTTING</scope>
    <source>
        <strain>cv. Suaveolens Grado</strain>
    </source>
</reference>
<accession>B0Z4X2</accession>
<geneLocation type="chloroplast"/>
<evidence type="ECO:0000255" key="1">
    <source>
        <dbReference type="HAMAP-Rule" id="MF_01308"/>
    </source>
</evidence>
<evidence type="ECO:0000305" key="2"/>